<accession>Q8T938</accession>
<evidence type="ECO:0000250" key="1"/>
<evidence type="ECO:0000305" key="2"/>
<comment type="function">
    <text evidence="1">Binds to actin and affects the structure of the cytoskeleton. At high concentrations, profilin prevents the polymerization of actin, whereas it enhances it at low concentrations. By binding to PIP2, it inhibits the formation of IP3 and DG (By similarity).</text>
</comment>
<comment type="subunit">
    <text evidence="1">Occurs in many kinds of cells as a complex with monomeric actin in a 1:1 ratio.</text>
</comment>
<comment type="subcellular location">
    <subcellularLocation>
        <location evidence="1">Cytoplasm</location>
        <location evidence="1">Cytoskeleton</location>
    </subcellularLocation>
</comment>
<comment type="similarity">
    <text evidence="2">Belongs to the profilin family.</text>
</comment>
<organism>
    <name type="scientific">Branchiostoma belcheri</name>
    <name type="common">Amphioxus</name>
    <dbReference type="NCBI Taxonomy" id="7741"/>
    <lineage>
        <taxon>Eukaryota</taxon>
        <taxon>Metazoa</taxon>
        <taxon>Chordata</taxon>
        <taxon>Cephalochordata</taxon>
        <taxon>Leptocardii</taxon>
        <taxon>Amphioxiformes</taxon>
        <taxon>Branchiostomatidae</taxon>
        <taxon>Branchiostoma</taxon>
    </lineage>
</organism>
<feature type="chain" id="PRO_0000199589" description="Profilin">
    <location>
        <begin position="1"/>
        <end position="126"/>
    </location>
</feature>
<protein>
    <recommendedName>
        <fullName>Profilin</fullName>
    </recommendedName>
</protein>
<name>PROF_BRABE</name>
<keyword id="KW-0009">Actin-binding</keyword>
<keyword id="KW-0963">Cytoplasm</keyword>
<keyword id="KW-0206">Cytoskeleton</keyword>
<keyword id="KW-1185">Reference proteome</keyword>
<sequence>MSWQQYVDQHLVATQCVTMAAICGLDGSIWAKSNGLELSQDEVATLARSFSKDEVLAANGIRIGGTKYIYLSGDDKLIRGKKDRQGVHIVKTKTAMVMALYAEPILPEQCAVVVEKLGDWLIQNDL</sequence>
<reference key="1">
    <citation type="submission" date="2002-01" db="EMBL/GenBank/DDBJ databases">
        <authorList>
            <person name="Zhang H."/>
            <person name="Yang H."/>
        </authorList>
    </citation>
    <scope>NUCLEOTIDE SEQUENCE [MRNA]</scope>
</reference>
<dbReference type="EMBL" id="AY074905">
    <property type="protein sequence ID" value="AAL75808.1"/>
    <property type="molecule type" value="mRNA"/>
</dbReference>
<dbReference type="SMR" id="Q8T938"/>
<dbReference type="Proteomes" id="UP000515135">
    <property type="component" value="Unplaced"/>
</dbReference>
<dbReference type="GO" id="GO:0005938">
    <property type="term" value="C:cell cortex"/>
    <property type="evidence" value="ECO:0007669"/>
    <property type="project" value="TreeGrafter"/>
</dbReference>
<dbReference type="GO" id="GO:0005856">
    <property type="term" value="C:cytoskeleton"/>
    <property type="evidence" value="ECO:0007669"/>
    <property type="project" value="UniProtKB-SubCell"/>
</dbReference>
<dbReference type="GO" id="GO:0003785">
    <property type="term" value="F:actin monomer binding"/>
    <property type="evidence" value="ECO:0007669"/>
    <property type="project" value="TreeGrafter"/>
</dbReference>
<dbReference type="GO" id="GO:0051128">
    <property type="term" value="P:regulation of cellular component organization"/>
    <property type="evidence" value="ECO:0007669"/>
    <property type="project" value="UniProtKB-ARBA"/>
</dbReference>
<dbReference type="CDD" id="cd00148">
    <property type="entry name" value="PROF"/>
    <property type="match status" value="1"/>
</dbReference>
<dbReference type="FunFam" id="3.30.450.30:FF:000001">
    <property type="entry name" value="Profilin"/>
    <property type="match status" value="1"/>
</dbReference>
<dbReference type="Gene3D" id="3.30.450.30">
    <property type="entry name" value="Dynein light chain 2a, cytoplasmic"/>
    <property type="match status" value="1"/>
</dbReference>
<dbReference type="InterPro" id="IPR048278">
    <property type="entry name" value="PFN"/>
</dbReference>
<dbReference type="InterPro" id="IPR005455">
    <property type="entry name" value="PFN_euk"/>
</dbReference>
<dbReference type="InterPro" id="IPR036140">
    <property type="entry name" value="PFN_sf"/>
</dbReference>
<dbReference type="InterPro" id="IPR027310">
    <property type="entry name" value="Profilin_CS"/>
</dbReference>
<dbReference type="PANTHER" id="PTHR11604">
    <property type="entry name" value="PROFILIN"/>
    <property type="match status" value="1"/>
</dbReference>
<dbReference type="PANTHER" id="PTHR11604:SF0">
    <property type="entry name" value="PROFILIN"/>
    <property type="match status" value="1"/>
</dbReference>
<dbReference type="Pfam" id="PF00235">
    <property type="entry name" value="Profilin"/>
    <property type="match status" value="1"/>
</dbReference>
<dbReference type="PRINTS" id="PR00392">
    <property type="entry name" value="PROFILIN"/>
</dbReference>
<dbReference type="PRINTS" id="PR01640">
    <property type="entry name" value="PROFILINPLNT"/>
</dbReference>
<dbReference type="SMART" id="SM00392">
    <property type="entry name" value="PROF"/>
    <property type="match status" value="1"/>
</dbReference>
<dbReference type="SUPFAM" id="SSF55770">
    <property type="entry name" value="Profilin (actin-binding protein)"/>
    <property type="match status" value="1"/>
</dbReference>
<dbReference type="PROSITE" id="PS00414">
    <property type="entry name" value="PROFILIN"/>
    <property type="match status" value="1"/>
</dbReference>
<proteinExistence type="evidence at transcript level"/>